<accession>Q6DB18</accession>
<keyword id="KW-0030">Aminoacyl-tRNA synthetase</keyword>
<keyword id="KW-0067">ATP-binding</keyword>
<keyword id="KW-0963">Cytoplasm</keyword>
<keyword id="KW-0436">Ligase</keyword>
<keyword id="KW-0547">Nucleotide-binding</keyword>
<keyword id="KW-0648">Protein biosynthesis</keyword>
<keyword id="KW-1185">Reference proteome</keyword>
<evidence type="ECO:0000255" key="1">
    <source>
        <dbReference type="HAMAP-Rule" id="MF_00254"/>
    </source>
</evidence>
<protein>
    <recommendedName>
        <fullName evidence="1">Glycine--tRNA ligase alpha subunit</fullName>
        <ecNumber evidence="1">6.1.1.14</ecNumber>
    </recommendedName>
    <alternativeName>
        <fullName evidence="1">Glycyl-tRNA synthetase alpha subunit</fullName>
        <shortName evidence="1">GlyRS</shortName>
    </alternativeName>
</protein>
<comment type="catalytic activity">
    <reaction evidence="1">
        <text>tRNA(Gly) + glycine + ATP = glycyl-tRNA(Gly) + AMP + diphosphate</text>
        <dbReference type="Rhea" id="RHEA:16013"/>
        <dbReference type="Rhea" id="RHEA-COMP:9664"/>
        <dbReference type="Rhea" id="RHEA-COMP:9683"/>
        <dbReference type="ChEBI" id="CHEBI:30616"/>
        <dbReference type="ChEBI" id="CHEBI:33019"/>
        <dbReference type="ChEBI" id="CHEBI:57305"/>
        <dbReference type="ChEBI" id="CHEBI:78442"/>
        <dbReference type="ChEBI" id="CHEBI:78522"/>
        <dbReference type="ChEBI" id="CHEBI:456215"/>
        <dbReference type="EC" id="6.1.1.14"/>
    </reaction>
</comment>
<comment type="subunit">
    <text evidence="1">Tetramer of two alpha and two beta subunits.</text>
</comment>
<comment type="subcellular location">
    <subcellularLocation>
        <location evidence="1">Cytoplasm</location>
    </subcellularLocation>
</comment>
<comment type="similarity">
    <text evidence="1">Belongs to the class-II aminoacyl-tRNA synthetase family.</text>
</comment>
<organism>
    <name type="scientific">Pectobacterium atrosepticum (strain SCRI 1043 / ATCC BAA-672)</name>
    <name type="common">Erwinia carotovora subsp. atroseptica</name>
    <dbReference type="NCBI Taxonomy" id="218491"/>
    <lineage>
        <taxon>Bacteria</taxon>
        <taxon>Pseudomonadati</taxon>
        <taxon>Pseudomonadota</taxon>
        <taxon>Gammaproteobacteria</taxon>
        <taxon>Enterobacterales</taxon>
        <taxon>Pectobacteriaceae</taxon>
        <taxon>Pectobacterium</taxon>
    </lineage>
</organism>
<proteinExistence type="inferred from homology"/>
<feature type="chain" id="PRO_1000047423" description="Glycine--tRNA ligase alpha subunit">
    <location>
        <begin position="1"/>
        <end position="304"/>
    </location>
</feature>
<dbReference type="EC" id="6.1.1.14" evidence="1"/>
<dbReference type="EMBL" id="BX950851">
    <property type="protein sequence ID" value="CAG73004.1"/>
    <property type="molecule type" value="Genomic_DNA"/>
</dbReference>
<dbReference type="RefSeq" id="WP_011091727.1">
    <property type="nucleotide sequence ID" value="NC_004547.2"/>
</dbReference>
<dbReference type="SMR" id="Q6DB18"/>
<dbReference type="STRING" id="218491.ECA0084"/>
<dbReference type="GeneID" id="57206937"/>
<dbReference type="KEGG" id="eca:ECA0084"/>
<dbReference type="PATRIC" id="fig|218491.5.peg.86"/>
<dbReference type="eggNOG" id="COG0752">
    <property type="taxonomic scope" value="Bacteria"/>
</dbReference>
<dbReference type="HOGENOM" id="CLU_057066_1_0_6"/>
<dbReference type="OrthoDB" id="9802183at2"/>
<dbReference type="Proteomes" id="UP000007966">
    <property type="component" value="Chromosome"/>
</dbReference>
<dbReference type="GO" id="GO:0005829">
    <property type="term" value="C:cytosol"/>
    <property type="evidence" value="ECO:0007669"/>
    <property type="project" value="TreeGrafter"/>
</dbReference>
<dbReference type="GO" id="GO:0005524">
    <property type="term" value="F:ATP binding"/>
    <property type="evidence" value="ECO:0007669"/>
    <property type="project" value="UniProtKB-UniRule"/>
</dbReference>
<dbReference type="GO" id="GO:0004820">
    <property type="term" value="F:glycine-tRNA ligase activity"/>
    <property type="evidence" value="ECO:0007669"/>
    <property type="project" value="UniProtKB-UniRule"/>
</dbReference>
<dbReference type="GO" id="GO:0006426">
    <property type="term" value="P:glycyl-tRNA aminoacylation"/>
    <property type="evidence" value="ECO:0007669"/>
    <property type="project" value="UniProtKB-UniRule"/>
</dbReference>
<dbReference type="CDD" id="cd00733">
    <property type="entry name" value="GlyRS_alpha_core"/>
    <property type="match status" value="1"/>
</dbReference>
<dbReference type="FunFam" id="1.20.58.180:FF:000001">
    <property type="entry name" value="Glycine--tRNA ligase alpha subunit"/>
    <property type="match status" value="1"/>
</dbReference>
<dbReference type="FunFam" id="3.30.930.10:FF:000006">
    <property type="entry name" value="Glycine--tRNA ligase alpha subunit"/>
    <property type="match status" value="1"/>
</dbReference>
<dbReference type="Gene3D" id="3.30.930.10">
    <property type="entry name" value="Bira Bifunctional Protein, Domain 2"/>
    <property type="match status" value="1"/>
</dbReference>
<dbReference type="Gene3D" id="1.20.58.180">
    <property type="entry name" value="Class II aaRS and biotin synthetases, domain 2"/>
    <property type="match status" value="1"/>
</dbReference>
<dbReference type="HAMAP" id="MF_00254">
    <property type="entry name" value="Gly_tRNA_synth_alpha"/>
    <property type="match status" value="1"/>
</dbReference>
<dbReference type="InterPro" id="IPR045864">
    <property type="entry name" value="aa-tRNA-synth_II/BPL/LPL"/>
</dbReference>
<dbReference type="InterPro" id="IPR006194">
    <property type="entry name" value="Gly-tRNA-synth_heterodimer"/>
</dbReference>
<dbReference type="InterPro" id="IPR002310">
    <property type="entry name" value="Gly-tRNA_ligase_asu"/>
</dbReference>
<dbReference type="NCBIfam" id="TIGR00388">
    <property type="entry name" value="glyQ"/>
    <property type="match status" value="1"/>
</dbReference>
<dbReference type="NCBIfam" id="NF006827">
    <property type="entry name" value="PRK09348.1"/>
    <property type="match status" value="1"/>
</dbReference>
<dbReference type="PANTHER" id="PTHR30075:SF2">
    <property type="entry name" value="GLYCINE--TRNA LIGASE, CHLOROPLASTIC_MITOCHONDRIAL 2"/>
    <property type="match status" value="1"/>
</dbReference>
<dbReference type="PANTHER" id="PTHR30075">
    <property type="entry name" value="GLYCYL-TRNA SYNTHETASE"/>
    <property type="match status" value="1"/>
</dbReference>
<dbReference type="Pfam" id="PF02091">
    <property type="entry name" value="tRNA-synt_2e"/>
    <property type="match status" value="1"/>
</dbReference>
<dbReference type="PRINTS" id="PR01044">
    <property type="entry name" value="TRNASYNTHGA"/>
</dbReference>
<dbReference type="SUPFAM" id="SSF55681">
    <property type="entry name" value="Class II aaRS and biotin synthetases"/>
    <property type="match status" value="1"/>
</dbReference>
<dbReference type="PROSITE" id="PS50861">
    <property type="entry name" value="AA_TRNA_LIGASE_II_GLYAB"/>
    <property type="match status" value="1"/>
</dbReference>
<name>SYGA_PECAS</name>
<gene>
    <name evidence="1" type="primary">glyQ</name>
    <name type="ordered locus">ECA0084</name>
</gene>
<sequence>MQKFDTKTFQGLILTLQDYWARQGCTIVQPLDMEVGAGTSHPMTCLRALGPEPMATAYVQPSRRPTDGRYGENPNRLQHYYQFQVVIKPSPENIQELYLGSLKELGMDPTIHDIRFVEDNWENPTLGAWGLGWEVWLNGMEVTQFTYFQQVGGLECKPVTGEITYGLERLAMYIQGVDSVYDLVWSDGLLGKTTYGDVFHQNEVEQSTYNFEHADVDFLFSCFEQYEKEAQHLLALEKPLPLPAYERILKAAHSFNLLDARKAISVTERQRYILRIRTLTKAVAEAYYASREALGFPMCNKKES</sequence>
<reference key="1">
    <citation type="journal article" date="2004" name="Proc. Natl. Acad. Sci. U.S.A.">
        <title>Genome sequence of the enterobacterial phytopathogen Erwinia carotovora subsp. atroseptica and characterization of virulence factors.</title>
        <authorList>
            <person name="Bell K.S."/>
            <person name="Sebaihia M."/>
            <person name="Pritchard L."/>
            <person name="Holden M.T.G."/>
            <person name="Hyman L.J."/>
            <person name="Holeva M.C."/>
            <person name="Thomson N.R."/>
            <person name="Bentley S.D."/>
            <person name="Churcher L.J.C."/>
            <person name="Mungall K."/>
            <person name="Atkin R."/>
            <person name="Bason N."/>
            <person name="Brooks K."/>
            <person name="Chillingworth T."/>
            <person name="Clark K."/>
            <person name="Doggett J."/>
            <person name="Fraser A."/>
            <person name="Hance Z."/>
            <person name="Hauser H."/>
            <person name="Jagels K."/>
            <person name="Moule S."/>
            <person name="Norbertczak H."/>
            <person name="Ormond D."/>
            <person name="Price C."/>
            <person name="Quail M.A."/>
            <person name="Sanders M."/>
            <person name="Walker D."/>
            <person name="Whitehead S."/>
            <person name="Salmond G.P.C."/>
            <person name="Birch P.R.J."/>
            <person name="Parkhill J."/>
            <person name="Toth I.K."/>
        </authorList>
    </citation>
    <scope>NUCLEOTIDE SEQUENCE [LARGE SCALE GENOMIC DNA]</scope>
    <source>
        <strain>SCRI 1043 / ATCC BAA-672</strain>
    </source>
</reference>